<organism>
    <name type="scientific">Burkholderia orbicola (strain AU 1054)</name>
    <dbReference type="NCBI Taxonomy" id="331271"/>
    <lineage>
        <taxon>Bacteria</taxon>
        <taxon>Pseudomonadati</taxon>
        <taxon>Pseudomonadota</taxon>
        <taxon>Betaproteobacteria</taxon>
        <taxon>Burkholderiales</taxon>
        <taxon>Burkholderiaceae</taxon>
        <taxon>Burkholderia</taxon>
        <taxon>Burkholderia cepacia complex</taxon>
        <taxon>Burkholderia orbicola</taxon>
    </lineage>
</organism>
<evidence type="ECO:0000255" key="1">
    <source>
        <dbReference type="HAMAP-Rule" id="MF_01274"/>
    </source>
</evidence>
<name>COAX_BURO1</name>
<reference key="1">
    <citation type="submission" date="2006-05" db="EMBL/GenBank/DDBJ databases">
        <title>Complete sequence of chromosome 1 of Burkholderia cenocepacia AU 1054.</title>
        <authorList>
            <consortium name="US DOE Joint Genome Institute"/>
            <person name="Copeland A."/>
            <person name="Lucas S."/>
            <person name="Lapidus A."/>
            <person name="Barry K."/>
            <person name="Detter J.C."/>
            <person name="Glavina del Rio T."/>
            <person name="Hammon N."/>
            <person name="Israni S."/>
            <person name="Dalin E."/>
            <person name="Tice H."/>
            <person name="Pitluck S."/>
            <person name="Chain P."/>
            <person name="Malfatti S."/>
            <person name="Shin M."/>
            <person name="Vergez L."/>
            <person name="Schmutz J."/>
            <person name="Larimer F."/>
            <person name="Land M."/>
            <person name="Hauser L."/>
            <person name="Kyrpides N."/>
            <person name="Lykidis A."/>
            <person name="LiPuma J.J."/>
            <person name="Konstantinidis K."/>
            <person name="Tiedje J.M."/>
            <person name="Richardson P."/>
        </authorList>
    </citation>
    <scope>NUCLEOTIDE SEQUENCE [LARGE SCALE GENOMIC DNA]</scope>
    <source>
        <strain>AU 1054</strain>
    </source>
</reference>
<keyword id="KW-0067">ATP-binding</keyword>
<keyword id="KW-0173">Coenzyme A biosynthesis</keyword>
<keyword id="KW-0963">Cytoplasm</keyword>
<keyword id="KW-0418">Kinase</keyword>
<keyword id="KW-0547">Nucleotide-binding</keyword>
<keyword id="KW-0630">Potassium</keyword>
<keyword id="KW-0808">Transferase</keyword>
<dbReference type="EC" id="2.7.1.33" evidence="1"/>
<dbReference type="EMBL" id="CP000378">
    <property type="protein sequence ID" value="ABF77192.1"/>
    <property type="molecule type" value="Genomic_DNA"/>
</dbReference>
<dbReference type="SMR" id="Q1BT63"/>
<dbReference type="HOGENOM" id="CLU_066627_0_0_4"/>
<dbReference type="UniPathway" id="UPA00241">
    <property type="reaction ID" value="UER00352"/>
</dbReference>
<dbReference type="GO" id="GO:0005737">
    <property type="term" value="C:cytoplasm"/>
    <property type="evidence" value="ECO:0007669"/>
    <property type="project" value="UniProtKB-SubCell"/>
</dbReference>
<dbReference type="GO" id="GO:0005524">
    <property type="term" value="F:ATP binding"/>
    <property type="evidence" value="ECO:0007669"/>
    <property type="project" value="UniProtKB-UniRule"/>
</dbReference>
<dbReference type="GO" id="GO:0004594">
    <property type="term" value="F:pantothenate kinase activity"/>
    <property type="evidence" value="ECO:0007669"/>
    <property type="project" value="UniProtKB-UniRule"/>
</dbReference>
<dbReference type="GO" id="GO:0015937">
    <property type="term" value="P:coenzyme A biosynthetic process"/>
    <property type="evidence" value="ECO:0007669"/>
    <property type="project" value="UniProtKB-UniRule"/>
</dbReference>
<dbReference type="CDD" id="cd24015">
    <property type="entry name" value="ASKHA_NBD_PanK-III"/>
    <property type="match status" value="1"/>
</dbReference>
<dbReference type="Gene3D" id="3.30.420.40">
    <property type="match status" value="2"/>
</dbReference>
<dbReference type="HAMAP" id="MF_01274">
    <property type="entry name" value="Pantothen_kinase_3"/>
    <property type="match status" value="1"/>
</dbReference>
<dbReference type="InterPro" id="IPR043129">
    <property type="entry name" value="ATPase_NBD"/>
</dbReference>
<dbReference type="InterPro" id="IPR004619">
    <property type="entry name" value="Type_III_PanK"/>
</dbReference>
<dbReference type="NCBIfam" id="TIGR00671">
    <property type="entry name" value="baf"/>
    <property type="match status" value="1"/>
</dbReference>
<dbReference type="NCBIfam" id="NF009868">
    <property type="entry name" value="PRK13328.1-4"/>
    <property type="match status" value="1"/>
</dbReference>
<dbReference type="PANTHER" id="PTHR34265">
    <property type="entry name" value="TYPE III PANTOTHENATE KINASE"/>
    <property type="match status" value="1"/>
</dbReference>
<dbReference type="PANTHER" id="PTHR34265:SF1">
    <property type="entry name" value="TYPE III PANTOTHENATE KINASE"/>
    <property type="match status" value="1"/>
</dbReference>
<dbReference type="Pfam" id="PF03309">
    <property type="entry name" value="Pan_kinase"/>
    <property type="match status" value="1"/>
</dbReference>
<dbReference type="SUPFAM" id="SSF53067">
    <property type="entry name" value="Actin-like ATPase domain"/>
    <property type="match status" value="2"/>
</dbReference>
<comment type="function">
    <text evidence="1">Catalyzes the phosphorylation of pantothenate (Pan), the first step in CoA biosynthesis.</text>
</comment>
<comment type="catalytic activity">
    <reaction evidence="1">
        <text>(R)-pantothenate + ATP = (R)-4'-phosphopantothenate + ADP + H(+)</text>
        <dbReference type="Rhea" id="RHEA:16373"/>
        <dbReference type="ChEBI" id="CHEBI:10986"/>
        <dbReference type="ChEBI" id="CHEBI:15378"/>
        <dbReference type="ChEBI" id="CHEBI:29032"/>
        <dbReference type="ChEBI" id="CHEBI:30616"/>
        <dbReference type="ChEBI" id="CHEBI:456216"/>
        <dbReference type="EC" id="2.7.1.33"/>
    </reaction>
</comment>
<comment type="cofactor">
    <cofactor evidence="1">
        <name>NH4(+)</name>
        <dbReference type="ChEBI" id="CHEBI:28938"/>
    </cofactor>
    <cofactor evidence="1">
        <name>K(+)</name>
        <dbReference type="ChEBI" id="CHEBI:29103"/>
    </cofactor>
    <text evidence="1">A monovalent cation. Ammonium or potassium.</text>
</comment>
<comment type="pathway">
    <text evidence="1">Cofactor biosynthesis; coenzyme A biosynthesis; CoA from (R)-pantothenate: step 1/5.</text>
</comment>
<comment type="subunit">
    <text evidence="1">Homodimer.</text>
</comment>
<comment type="subcellular location">
    <subcellularLocation>
        <location evidence="1">Cytoplasm</location>
    </subcellularLocation>
</comment>
<comment type="similarity">
    <text evidence="1">Belongs to the type III pantothenate kinase family.</text>
</comment>
<protein>
    <recommendedName>
        <fullName evidence="1">Type III pantothenate kinase</fullName>
        <ecNumber evidence="1">2.7.1.33</ecNumber>
    </recommendedName>
    <alternativeName>
        <fullName evidence="1">PanK-III</fullName>
    </alternativeName>
    <alternativeName>
        <fullName evidence="1">Pantothenic acid kinase</fullName>
    </alternativeName>
</protein>
<accession>Q1BT63</accession>
<sequence>MSEPHLLIDAGNSRIKWALADARRSLVDTGAFGHTRDGGADPDWSHLPRPRGAWISNVAGADVAARLDALLDARWPGLPRTTIRARPVQCGVTNGYTTPEQLGSDRWAGLIGAHAAFPGEHLLIATFGTATTLEALRADGRFTGGLIAPGWALMMRALGTHTAQLPTLTTDIASGLLAGAQAEPFQIDTPRSLSAGCLYAQAGLIERAWRDLVAAWQAPVRLVLAGGAADDVARALTVAHTRHDALILSGLALIAADAAPATAQD</sequence>
<proteinExistence type="inferred from homology"/>
<gene>
    <name evidence="1" type="primary">coaX</name>
    <name type="ordered locus">Bcen_2291</name>
</gene>
<feature type="chain" id="PRO_0000270865" description="Type III pantothenate kinase">
    <location>
        <begin position="1"/>
        <end position="265"/>
    </location>
</feature>
<feature type="active site" description="Proton acceptor" evidence="1">
    <location>
        <position position="105"/>
    </location>
</feature>
<feature type="binding site" evidence="1">
    <location>
        <begin position="9"/>
        <end position="16"/>
    </location>
    <ligand>
        <name>ATP</name>
        <dbReference type="ChEBI" id="CHEBI:30616"/>
    </ligand>
</feature>
<feature type="binding site" evidence="1">
    <location>
        <position position="96"/>
    </location>
    <ligand>
        <name>substrate</name>
    </ligand>
</feature>
<feature type="binding site" evidence="1">
    <location>
        <begin position="103"/>
        <end position="106"/>
    </location>
    <ligand>
        <name>substrate</name>
    </ligand>
</feature>
<feature type="binding site" evidence="1">
    <location>
        <position position="129"/>
    </location>
    <ligand>
        <name>ATP</name>
        <dbReference type="ChEBI" id="CHEBI:30616"/>
    </ligand>
</feature>
<feature type="binding site" evidence="1">
    <location>
        <position position="189"/>
    </location>
    <ligand>
        <name>substrate</name>
    </ligand>
</feature>